<accession>P9WK74</accession>
<accession>L0TBK6</accession>
<accession>O33251</accession>
<accession>P65300</accession>
<comment type="subcellular location">
    <subcellularLocation>
        <location evidence="1">Cell membrane</location>
        <topology evidence="1">Lipid-anchor</topology>
    </subcellularLocation>
</comment>
<comment type="similarity">
    <text evidence="3">Belongs to the MTB12 family.</text>
</comment>
<protein>
    <recommendedName>
        <fullName>Putative lipoprotein LppK</fullName>
    </recommendedName>
</protein>
<feature type="signal peptide" evidence="1">
    <location>
        <begin position="1"/>
        <end position="22"/>
    </location>
</feature>
<feature type="chain" id="PRO_0000427703" description="Putative lipoprotein LppK">
    <location>
        <begin position="23"/>
        <end position="189"/>
    </location>
</feature>
<feature type="region of interest" description="Disordered" evidence="2">
    <location>
        <begin position="26"/>
        <end position="49"/>
    </location>
</feature>
<feature type="region of interest" description="Disordered" evidence="2">
    <location>
        <begin position="166"/>
        <end position="189"/>
    </location>
</feature>
<feature type="compositionally biased region" description="Low complexity" evidence="2">
    <location>
        <begin position="169"/>
        <end position="179"/>
    </location>
</feature>
<feature type="compositionally biased region" description="Pro residues" evidence="2">
    <location>
        <begin position="180"/>
        <end position="189"/>
    </location>
</feature>
<feature type="lipid moiety-binding region" description="N-palmitoyl cysteine" evidence="1">
    <location>
        <position position="23"/>
    </location>
</feature>
<feature type="lipid moiety-binding region" description="S-diacylglycerol cysteine" evidence="1">
    <location>
        <position position="23"/>
    </location>
</feature>
<gene>
    <name type="primary">lppK</name>
    <name type="ordered locus">MT2176</name>
</gene>
<reference key="1">
    <citation type="journal article" date="2002" name="J. Bacteriol.">
        <title>Whole-genome comparison of Mycobacterium tuberculosis clinical and laboratory strains.</title>
        <authorList>
            <person name="Fleischmann R.D."/>
            <person name="Alland D."/>
            <person name="Eisen J.A."/>
            <person name="Carpenter L."/>
            <person name="White O."/>
            <person name="Peterson J.D."/>
            <person name="DeBoy R.T."/>
            <person name="Dodson R.J."/>
            <person name="Gwinn M.L."/>
            <person name="Haft D.H."/>
            <person name="Hickey E.K."/>
            <person name="Kolonay J.F."/>
            <person name="Nelson W.C."/>
            <person name="Umayam L.A."/>
            <person name="Ermolaeva M.D."/>
            <person name="Salzberg S.L."/>
            <person name="Delcher A."/>
            <person name="Utterback T.R."/>
            <person name="Weidman J.F."/>
            <person name="Khouri H.M."/>
            <person name="Gill J."/>
            <person name="Mikula A."/>
            <person name="Bishai W."/>
            <person name="Jacobs W.R. Jr."/>
            <person name="Venter J.C."/>
            <person name="Fraser C.M."/>
        </authorList>
    </citation>
    <scope>NUCLEOTIDE SEQUENCE [LARGE SCALE GENOMIC DNA]</scope>
    <source>
        <strain>CDC 1551 / Oshkosh</strain>
    </source>
</reference>
<evidence type="ECO:0000255" key="1">
    <source>
        <dbReference type="PROSITE-ProRule" id="PRU00303"/>
    </source>
</evidence>
<evidence type="ECO:0000256" key="2">
    <source>
        <dbReference type="SAM" id="MobiDB-lite"/>
    </source>
</evidence>
<evidence type="ECO:0000305" key="3"/>
<name>LPPK_MYCTO</name>
<keyword id="KW-1003">Cell membrane</keyword>
<keyword id="KW-0449">Lipoprotein</keyword>
<keyword id="KW-0472">Membrane</keyword>
<keyword id="KW-0564">Palmitate</keyword>
<keyword id="KW-1185">Reference proteome</keyword>
<keyword id="KW-0732">Signal</keyword>
<proteinExistence type="inferred from homology"/>
<organism>
    <name type="scientific">Mycobacterium tuberculosis (strain CDC 1551 / Oshkosh)</name>
    <dbReference type="NCBI Taxonomy" id="83331"/>
    <lineage>
        <taxon>Bacteria</taxon>
        <taxon>Bacillati</taxon>
        <taxon>Actinomycetota</taxon>
        <taxon>Actinomycetes</taxon>
        <taxon>Mycobacteriales</taxon>
        <taxon>Mycobacteriaceae</taxon>
        <taxon>Mycobacterium</taxon>
        <taxon>Mycobacterium tuberculosis complex</taxon>
    </lineage>
</organism>
<dbReference type="EMBL" id="AE000516">
    <property type="protein sequence ID" value="AAK46459.1"/>
    <property type="molecule type" value="Genomic_DNA"/>
</dbReference>
<dbReference type="PIR" id="G70512">
    <property type="entry name" value="G70512"/>
</dbReference>
<dbReference type="RefSeq" id="WP_003900470.1">
    <property type="nucleotide sequence ID" value="NZ_KK341227.1"/>
</dbReference>
<dbReference type="SMR" id="P9WK74"/>
<dbReference type="KEGG" id="mtc:MT2176"/>
<dbReference type="PATRIC" id="fig|83331.31.peg.2346"/>
<dbReference type="HOGENOM" id="CLU_084151_2_0_11"/>
<dbReference type="Proteomes" id="UP000001020">
    <property type="component" value="Chromosome"/>
</dbReference>
<dbReference type="GO" id="GO:0005886">
    <property type="term" value="C:plasma membrane"/>
    <property type="evidence" value="ECO:0007669"/>
    <property type="project" value="UniProtKB-SubCell"/>
</dbReference>
<dbReference type="PROSITE" id="PS51257">
    <property type="entry name" value="PROKAR_LIPOPROTEIN"/>
    <property type="match status" value="1"/>
</dbReference>
<sequence length="189" mass="19728">MRRNIRVTLGAATIVAALGLSGCSHPEFKRSSPPAPSLPPVTSSPLEAAPITPLPAPEALIDVLSRLADPAVPGTNKVQLIEGATPENAAALDRFTTALRDGSYLPMTFAANDIAWSDNKPSDVMATVVVTTAHPDNREFTFPMEFVSFKGGWQLSRQTAEMLLAMGNSPDSTPSATSPAPAPSPTPPG</sequence>